<organism>
    <name type="scientific">Chlamydia felis (strain Fe/C-56)</name>
    <name type="common">Chlamydophila felis</name>
    <dbReference type="NCBI Taxonomy" id="264202"/>
    <lineage>
        <taxon>Bacteria</taxon>
        <taxon>Pseudomonadati</taxon>
        <taxon>Chlamydiota</taxon>
        <taxon>Chlamydiia</taxon>
        <taxon>Chlamydiales</taxon>
        <taxon>Chlamydiaceae</taxon>
        <taxon>Chlamydia/Chlamydophila group</taxon>
        <taxon>Chlamydia</taxon>
    </lineage>
</organism>
<reference key="1">
    <citation type="journal article" date="2006" name="DNA Res.">
        <title>Genome sequence of the cat pathogen, Chlamydophila felis.</title>
        <authorList>
            <person name="Azuma Y."/>
            <person name="Hirakawa H."/>
            <person name="Yamashita A."/>
            <person name="Cai Y."/>
            <person name="Rahman M.A."/>
            <person name="Suzuki H."/>
            <person name="Mitaku S."/>
            <person name="Toh H."/>
            <person name="Goto S."/>
            <person name="Murakami T."/>
            <person name="Sugi K."/>
            <person name="Hayashi H."/>
            <person name="Fukushi H."/>
            <person name="Hattori M."/>
            <person name="Kuhara S."/>
            <person name="Shirai M."/>
        </authorList>
    </citation>
    <scope>NUCLEOTIDE SEQUENCE [LARGE SCALE GENOMIC DNA]</scope>
    <source>
        <strain>Fe/C-56</strain>
    </source>
</reference>
<feature type="chain" id="PRO_0000265344" description="Small ribosomal subunit protein uS19">
    <location>
        <begin position="1"/>
        <end position="88"/>
    </location>
</feature>
<evidence type="ECO:0000255" key="1">
    <source>
        <dbReference type="HAMAP-Rule" id="MF_00531"/>
    </source>
</evidence>
<evidence type="ECO:0000305" key="2"/>
<comment type="function">
    <text evidence="1">Protein S19 forms a complex with S13 that binds strongly to the 16S ribosomal RNA.</text>
</comment>
<comment type="similarity">
    <text evidence="1">Belongs to the universal ribosomal protein uS19 family.</text>
</comment>
<name>RS19_CHLFF</name>
<dbReference type="EMBL" id="AP006861">
    <property type="protein sequence ID" value="BAE81681.1"/>
    <property type="molecule type" value="Genomic_DNA"/>
</dbReference>
<dbReference type="RefSeq" id="WP_011458454.1">
    <property type="nucleotide sequence ID" value="NC_007899.1"/>
</dbReference>
<dbReference type="SMR" id="Q252V7"/>
<dbReference type="STRING" id="264202.CF0909"/>
<dbReference type="KEGG" id="cfe:CF0909"/>
<dbReference type="eggNOG" id="COG0185">
    <property type="taxonomic scope" value="Bacteria"/>
</dbReference>
<dbReference type="HOGENOM" id="CLU_144911_0_1_0"/>
<dbReference type="OrthoDB" id="9797833at2"/>
<dbReference type="Proteomes" id="UP000001260">
    <property type="component" value="Chromosome"/>
</dbReference>
<dbReference type="GO" id="GO:0005737">
    <property type="term" value="C:cytoplasm"/>
    <property type="evidence" value="ECO:0007669"/>
    <property type="project" value="UniProtKB-ARBA"/>
</dbReference>
<dbReference type="GO" id="GO:0015935">
    <property type="term" value="C:small ribosomal subunit"/>
    <property type="evidence" value="ECO:0007669"/>
    <property type="project" value="InterPro"/>
</dbReference>
<dbReference type="GO" id="GO:0019843">
    <property type="term" value="F:rRNA binding"/>
    <property type="evidence" value="ECO:0007669"/>
    <property type="project" value="UniProtKB-UniRule"/>
</dbReference>
<dbReference type="GO" id="GO:0003735">
    <property type="term" value="F:structural constituent of ribosome"/>
    <property type="evidence" value="ECO:0007669"/>
    <property type="project" value="InterPro"/>
</dbReference>
<dbReference type="GO" id="GO:0000028">
    <property type="term" value="P:ribosomal small subunit assembly"/>
    <property type="evidence" value="ECO:0007669"/>
    <property type="project" value="TreeGrafter"/>
</dbReference>
<dbReference type="GO" id="GO:0006412">
    <property type="term" value="P:translation"/>
    <property type="evidence" value="ECO:0007669"/>
    <property type="project" value="UniProtKB-UniRule"/>
</dbReference>
<dbReference type="FunFam" id="3.30.860.10:FF:000001">
    <property type="entry name" value="30S ribosomal protein S19"/>
    <property type="match status" value="1"/>
</dbReference>
<dbReference type="Gene3D" id="3.30.860.10">
    <property type="entry name" value="30s Ribosomal Protein S19, Chain A"/>
    <property type="match status" value="1"/>
</dbReference>
<dbReference type="HAMAP" id="MF_00531">
    <property type="entry name" value="Ribosomal_uS19"/>
    <property type="match status" value="1"/>
</dbReference>
<dbReference type="InterPro" id="IPR002222">
    <property type="entry name" value="Ribosomal_uS19"/>
</dbReference>
<dbReference type="InterPro" id="IPR005732">
    <property type="entry name" value="Ribosomal_uS19_bac-type"/>
</dbReference>
<dbReference type="InterPro" id="IPR020934">
    <property type="entry name" value="Ribosomal_uS19_CS"/>
</dbReference>
<dbReference type="InterPro" id="IPR023575">
    <property type="entry name" value="Ribosomal_uS19_SF"/>
</dbReference>
<dbReference type="NCBIfam" id="TIGR01050">
    <property type="entry name" value="rpsS_bact"/>
    <property type="match status" value="1"/>
</dbReference>
<dbReference type="PANTHER" id="PTHR11880">
    <property type="entry name" value="RIBOSOMAL PROTEIN S19P FAMILY MEMBER"/>
    <property type="match status" value="1"/>
</dbReference>
<dbReference type="PANTHER" id="PTHR11880:SF8">
    <property type="entry name" value="SMALL RIBOSOMAL SUBUNIT PROTEIN US19M"/>
    <property type="match status" value="1"/>
</dbReference>
<dbReference type="Pfam" id="PF00203">
    <property type="entry name" value="Ribosomal_S19"/>
    <property type="match status" value="1"/>
</dbReference>
<dbReference type="PIRSF" id="PIRSF002144">
    <property type="entry name" value="Ribosomal_S19"/>
    <property type="match status" value="1"/>
</dbReference>
<dbReference type="PRINTS" id="PR00975">
    <property type="entry name" value="RIBOSOMALS19"/>
</dbReference>
<dbReference type="SUPFAM" id="SSF54570">
    <property type="entry name" value="Ribosomal protein S19"/>
    <property type="match status" value="1"/>
</dbReference>
<dbReference type="PROSITE" id="PS00323">
    <property type="entry name" value="RIBOSOMAL_S19"/>
    <property type="match status" value="1"/>
</dbReference>
<gene>
    <name evidence="1" type="primary">rpsS</name>
    <name type="ordered locus">CF0909</name>
</gene>
<proteinExistence type="inferred from homology"/>
<protein>
    <recommendedName>
        <fullName evidence="1">Small ribosomal subunit protein uS19</fullName>
    </recommendedName>
    <alternativeName>
        <fullName evidence="2">30S ribosomal protein S19</fullName>
    </alternativeName>
</protein>
<sequence length="88" mass="10093">MGRSLRKGPFVDHSLIKKVRAMNLLEKKAPIKTWSRRSMITPEMIGHTFEVHNGKKFLTVFVSETMVGHKLGEFSPTRMFKSHPVKKG</sequence>
<accession>Q252V7</accession>
<keyword id="KW-0687">Ribonucleoprotein</keyword>
<keyword id="KW-0689">Ribosomal protein</keyword>
<keyword id="KW-0694">RNA-binding</keyword>
<keyword id="KW-0699">rRNA-binding</keyword>